<reference key="1">
    <citation type="journal article" date="2003" name="Genome Res.">
        <title>Reevaluating human gene annotation: a second-generation analysis of chromosome 22.</title>
        <authorList>
            <person name="Collins J.E."/>
            <person name="Goward M.E."/>
            <person name="Cole C.G."/>
            <person name="Smink L.J."/>
            <person name="Huckle E.J."/>
            <person name="Knowles S."/>
            <person name="Bye J.M."/>
            <person name="Beare D.M."/>
            <person name="Dunham I."/>
        </authorList>
    </citation>
    <scope>NUCLEOTIDE SEQUENCE [LARGE SCALE MRNA]</scope>
</reference>
<reference key="2">
    <citation type="journal article" date="2004" name="Nat. Genet.">
        <title>Complete sequencing and characterization of 21,243 full-length human cDNAs.</title>
        <authorList>
            <person name="Ota T."/>
            <person name="Suzuki Y."/>
            <person name="Nishikawa T."/>
            <person name="Otsuki T."/>
            <person name="Sugiyama T."/>
            <person name="Irie R."/>
            <person name="Wakamatsu A."/>
            <person name="Hayashi K."/>
            <person name="Sato H."/>
            <person name="Nagai K."/>
            <person name="Kimura K."/>
            <person name="Makita H."/>
            <person name="Sekine M."/>
            <person name="Obayashi M."/>
            <person name="Nishi T."/>
            <person name="Shibahara T."/>
            <person name="Tanaka T."/>
            <person name="Ishii S."/>
            <person name="Yamamoto J."/>
            <person name="Saito K."/>
            <person name="Kawai Y."/>
            <person name="Isono Y."/>
            <person name="Nakamura Y."/>
            <person name="Nagahari K."/>
            <person name="Murakami K."/>
            <person name="Yasuda T."/>
            <person name="Iwayanagi T."/>
            <person name="Wagatsuma M."/>
            <person name="Shiratori A."/>
            <person name="Sudo H."/>
            <person name="Hosoiri T."/>
            <person name="Kaku Y."/>
            <person name="Kodaira H."/>
            <person name="Kondo H."/>
            <person name="Sugawara M."/>
            <person name="Takahashi M."/>
            <person name="Kanda K."/>
            <person name="Yokoi T."/>
            <person name="Furuya T."/>
            <person name="Kikkawa E."/>
            <person name="Omura Y."/>
            <person name="Abe K."/>
            <person name="Kamihara K."/>
            <person name="Katsuta N."/>
            <person name="Sato K."/>
            <person name="Tanikawa M."/>
            <person name="Yamazaki M."/>
            <person name="Ninomiya K."/>
            <person name="Ishibashi T."/>
            <person name="Yamashita H."/>
            <person name="Murakawa K."/>
            <person name="Fujimori K."/>
            <person name="Tanai H."/>
            <person name="Kimata M."/>
            <person name="Watanabe M."/>
            <person name="Hiraoka S."/>
            <person name="Chiba Y."/>
            <person name="Ishida S."/>
            <person name="Ono Y."/>
            <person name="Takiguchi S."/>
            <person name="Watanabe S."/>
            <person name="Yosida M."/>
            <person name="Hotuta T."/>
            <person name="Kusano J."/>
            <person name="Kanehori K."/>
            <person name="Takahashi-Fujii A."/>
            <person name="Hara H."/>
            <person name="Tanase T.-O."/>
            <person name="Nomura Y."/>
            <person name="Togiya S."/>
            <person name="Komai F."/>
            <person name="Hara R."/>
            <person name="Takeuchi K."/>
            <person name="Arita M."/>
            <person name="Imose N."/>
            <person name="Musashino K."/>
            <person name="Yuuki H."/>
            <person name="Oshima A."/>
            <person name="Sasaki N."/>
            <person name="Aotsuka S."/>
            <person name="Yoshikawa Y."/>
            <person name="Matsunawa H."/>
            <person name="Ichihara T."/>
            <person name="Shiohata N."/>
            <person name="Sano S."/>
            <person name="Moriya S."/>
            <person name="Momiyama H."/>
            <person name="Satoh N."/>
            <person name="Takami S."/>
            <person name="Terashima Y."/>
            <person name="Suzuki O."/>
            <person name="Nakagawa S."/>
            <person name="Senoh A."/>
            <person name="Mizoguchi H."/>
            <person name="Goto Y."/>
            <person name="Shimizu F."/>
            <person name="Wakebe H."/>
            <person name="Hishigaki H."/>
            <person name="Watanabe T."/>
            <person name="Sugiyama A."/>
            <person name="Takemoto M."/>
            <person name="Kawakami B."/>
            <person name="Yamazaki M."/>
            <person name="Watanabe K."/>
            <person name="Kumagai A."/>
            <person name="Itakura S."/>
            <person name="Fukuzumi Y."/>
            <person name="Fujimori Y."/>
            <person name="Komiyama M."/>
            <person name="Tashiro H."/>
            <person name="Tanigami A."/>
            <person name="Fujiwara T."/>
            <person name="Ono T."/>
            <person name="Yamada K."/>
            <person name="Fujii Y."/>
            <person name="Ozaki K."/>
            <person name="Hirao M."/>
            <person name="Ohmori Y."/>
            <person name="Kawabata A."/>
            <person name="Hikiji T."/>
            <person name="Kobatake N."/>
            <person name="Inagaki H."/>
            <person name="Ikema Y."/>
            <person name="Okamoto S."/>
            <person name="Okitani R."/>
            <person name="Kawakami T."/>
            <person name="Noguchi S."/>
            <person name="Itoh T."/>
            <person name="Shigeta K."/>
            <person name="Senba T."/>
            <person name="Matsumura K."/>
            <person name="Nakajima Y."/>
            <person name="Mizuno T."/>
            <person name="Morinaga M."/>
            <person name="Sasaki M."/>
            <person name="Togashi T."/>
            <person name="Oyama M."/>
            <person name="Hata H."/>
            <person name="Watanabe M."/>
            <person name="Komatsu T."/>
            <person name="Mizushima-Sugano J."/>
            <person name="Satoh T."/>
            <person name="Shirai Y."/>
            <person name="Takahashi Y."/>
            <person name="Nakagawa K."/>
            <person name="Okumura K."/>
            <person name="Nagase T."/>
            <person name="Nomura N."/>
            <person name="Kikuchi H."/>
            <person name="Masuho Y."/>
            <person name="Yamashita R."/>
            <person name="Nakai K."/>
            <person name="Yada T."/>
            <person name="Nakamura Y."/>
            <person name="Ohara O."/>
            <person name="Isogai T."/>
            <person name="Sugano S."/>
        </authorList>
    </citation>
    <scope>NUCLEOTIDE SEQUENCE [LARGE SCALE MRNA]</scope>
    <source>
        <tissue>Cerebellum</tissue>
    </source>
</reference>
<reference key="3">
    <citation type="journal article" date="1999" name="Nature">
        <title>The DNA sequence of human chromosome 22.</title>
        <authorList>
            <person name="Dunham I."/>
            <person name="Hunt A.R."/>
            <person name="Collins J.E."/>
            <person name="Bruskiewich R."/>
            <person name="Beare D.M."/>
            <person name="Clamp M."/>
            <person name="Smink L.J."/>
            <person name="Ainscough R."/>
            <person name="Almeida J.P."/>
            <person name="Babbage A.K."/>
            <person name="Bagguley C."/>
            <person name="Bailey J."/>
            <person name="Barlow K.F."/>
            <person name="Bates K.N."/>
            <person name="Beasley O.P."/>
            <person name="Bird C.P."/>
            <person name="Blakey S.E."/>
            <person name="Bridgeman A.M."/>
            <person name="Buck D."/>
            <person name="Burgess J."/>
            <person name="Burrill W.D."/>
            <person name="Burton J."/>
            <person name="Carder C."/>
            <person name="Carter N.P."/>
            <person name="Chen Y."/>
            <person name="Clark G."/>
            <person name="Clegg S.M."/>
            <person name="Cobley V.E."/>
            <person name="Cole C.G."/>
            <person name="Collier R.E."/>
            <person name="Connor R."/>
            <person name="Conroy D."/>
            <person name="Corby N.R."/>
            <person name="Coville G.J."/>
            <person name="Cox A.V."/>
            <person name="Davis J."/>
            <person name="Dawson E."/>
            <person name="Dhami P.D."/>
            <person name="Dockree C."/>
            <person name="Dodsworth S.J."/>
            <person name="Durbin R.M."/>
            <person name="Ellington A.G."/>
            <person name="Evans K.L."/>
            <person name="Fey J.M."/>
            <person name="Fleming K."/>
            <person name="French L."/>
            <person name="Garner A.A."/>
            <person name="Gilbert J.G.R."/>
            <person name="Goward M.E."/>
            <person name="Grafham D.V."/>
            <person name="Griffiths M.N.D."/>
            <person name="Hall C."/>
            <person name="Hall R.E."/>
            <person name="Hall-Tamlyn G."/>
            <person name="Heathcott R.W."/>
            <person name="Ho S."/>
            <person name="Holmes S."/>
            <person name="Hunt S.E."/>
            <person name="Jones M.C."/>
            <person name="Kershaw J."/>
            <person name="Kimberley A.M."/>
            <person name="King A."/>
            <person name="Laird G.K."/>
            <person name="Langford C.F."/>
            <person name="Leversha M.A."/>
            <person name="Lloyd C."/>
            <person name="Lloyd D.M."/>
            <person name="Martyn I.D."/>
            <person name="Mashreghi-Mohammadi M."/>
            <person name="Matthews L.H."/>
            <person name="Mccann O.T."/>
            <person name="Mcclay J."/>
            <person name="Mclaren S."/>
            <person name="McMurray A.A."/>
            <person name="Milne S.A."/>
            <person name="Mortimore B.J."/>
            <person name="Odell C.N."/>
            <person name="Pavitt R."/>
            <person name="Pearce A.V."/>
            <person name="Pearson D."/>
            <person name="Phillimore B.J.C.T."/>
            <person name="Phillips S.H."/>
            <person name="Plumb R.W."/>
            <person name="Ramsay H."/>
            <person name="Ramsey Y."/>
            <person name="Rogers L."/>
            <person name="Ross M.T."/>
            <person name="Scott C.E."/>
            <person name="Sehra H.K."/>
            <person name="Skuce C.D."/>
            <person name="Smalley S."/>
            <person name="Smith M.L."/>
            <person name="Soderlund C."/>
            <person name="Spragon L."/>
            <person name="Steward C.A."/>
            <person name="Sulston J.E."/>
            <person name="Swann R.M."/>
            <person name="Vaudin M."/>
            <person name="Wall M."/>
            <person name="Wallis J.M."/>
            <person name="Whiteley M.N."/>
            <person name="Willey D.L."/>
            <person name="Williams L."/>
            <person name="Williams S.A."/>
            <person name="Williamson H."/>
            <person name="Wilmer T.E."/>
            <person name="Wilming L."/>
            <person name="Wright C.L."/>
            <person name="Hubbard T."/>
            <person name="Bentley D.R."/>
            <person name="Beck S."/>
            <person name="Rogers J."/>
            <person name="Shimizu N."/>
            <person name="Minoshima S."/>
            <person name="Kawasaki K."/>
            <person name="Sasaki T."/>
            <person name="Asakawa S."/>
            <person name="Kudoh J."/>
            <person name="Shintani A."/>
            <person name="Shibuya K."/>
            <person name="Yoshizaki Y."/>
            <person name="Aoki N."/>
            <person name="Mitsuyama S."/>
            <person name="Roe B.A."/>
            <person name="Chen F."/>
            <person name="Chu L."/>
            <person name="Crabtree J."/>
            <person name="Deschamps S."/>
            <person name="Do A."/>
            <person name="Do T."/>
            <person name="Dorman A."/>
            <person name="Fang F."/>
            <person name="Fu Y."/>
            <person name="Hu P."/>
            <person name="Hua A."/>
            <person name="Kenton S."/>
            <person name="Lai H."/>
            <person name="Lao H.I."/>
            <person name="Lewis J."/>
            <person name="Lewis S."/>
            <person name="Lin S.-P."/>
            <person name="Loh P."/>
            <person name="Malaj E."/>
            <person name="Nguyen T."/>
            <person name="Pan H."/>
            <person name="Phan S."/>
            <person name="Qi S."/>
            <person name="Qian Y."/>
            <person name="Ray L."/>
            <person name="Ren Q."/>
            <person name="Shaull S."/>
            <person name="Sloan D."/>
            <person name="Song L."/>
            <person name="Wang Q."/>
            <person name="Wang Y."/>
            <person name="Wang Z."/>
            <person name="White J."/>
            <person name="Willingham D."/>
            <person name="Wu H."/>
            <person name="Yao Z."/>
            <person name="Zhan M."/>
            <person name="Zhang G."/>
            <person name="Chissoe S."/>
            <person name="Murray J."/>
            <person name="Miller N."/>
            <person name="Minx P."/>
            <person name="Fulton R."/>
            <person name="Johnson D."/>
            <person name="Bemis G."/>
            <person name="Bentley D."/>
            <person name="Bradshaw H."/>
            <person name="Bourne S."/>
            <person name="Cordes M."/>
            <person name="Du Z."/>
            <person name="Fulton L."/>
            <person name="Goela D."/>
            <person name="Graves T."/>
            <person name="Hawkins J."/>
            <person name="Hinds K."/>
            <person name="Kemp K."/>
            <person name="Latreille P."/>
            <person name="Layman D."/>
            <person name="Ozersky P."/>
            <person name="Rohlfing T."/>
            <person name="Scheet P."/>
            <person name="Walker C."/>
            <person name="Wamsley A."/>
            <person name="Wohldmann P."/>
            <person name="Pepin K."/>
            <person name="Nelson J."/>
            <person name="Korf I."/>
            <person name="Bedell J.A."/>
            <person name="Hillier L.W."/>
            <person name="Mardis E."/>
            <person name="Waterston R."/>
            <person name="Wilson R."/>
            <person name="Emanuel B.S."/>
            <person name="Shaikh T."/>
            <person name="Kurahashi H."/>
            <person name="Saitta S."/>
            <person name="Budarf M.L."/>
            <person name="McDermid H.E."/>
            <person name="Johnson A."/>
            <person name="Wong A.C.C."/>
            <person name="Morrow B.E."/>
            <person name="Edelmann L."/>
            <person name="Kim U.J."/>
            <person name="Shizuya H."/>
            <person name="Simon M.I."/>
            <person name="Dumanski J.P."/>
            <person name="Peyrard M."/>
            <person name="Kedra D."/>
            <person name="Seroussi E."/>
            <person name="Fransson I."/>
            <person name="Tapia I."/>
            <person name="Bruder C.E."/>
            <person name="O'Brien K.P."/>
            <person name="Wilkinson P."/>
            <person name="Bodenteich A."/>
            <person name="Hartman K."/>
            <person name="Hu X."/>
            <person name="Khan A.S."/>
            <person name="Lane L."/>
            <person name="Tilahun Y."/>
            <person name="Wright H."/>
        </authorList>
    </citation>
    <scope>NUCLEOTIDE SEQUENCE [LARGE SCALE GENOMIC DNA]</scope>
</reference>
<reference key="4">
    <citation type="submission" date="2005-07" db="EMBL/GenBank/DDBJ databases">
        <authorList>
            <person name="Mural R.J."/>
            <person name="Istrail S."/>
            <person name="Sutton G.G."/>
            <person name="Florea L."/>
            <person name="Halpern A.L."/>
            <person name="Mobarry C.M."/>
            <person name="Lippert R."/>
            <person name="Walenz B."/>
            <person name="Shatkay H."/>
            <person name="Dew I."/>
            <person name="Miller J.R."/>
            <person name="Flanigan M.J."/>
            <person name="Edwards N.J."/>
            <person name="Bolanos R."/>
            <person name="Fasulo D."/>
            <person name="Halldorsson B.V."/>
            <person name="Hannenhalli S."/>
            <person name="Turner R."/>
            <person name="Yooseph S."/>
            <person name="Lu F."/>
            <person name="Nusskern D.R."/>
            <person name="Shue B.C."/>
            <person name="Zheng X.H."/>
            <person name="Zhong F."/>
            <person name="Delcher A.L."/>
            <person name="Huson D.H."/>
            <person name="Kravitz S.A."/>
            <person name="Mouchard L."/>
            <person name="Reinert K."/>
            <person name="Remington K.A."/>
            <person name="Clark A.G."/>
            <person name="Waterman M.S."/>
            <person name="Eichler E.E."/>
            <person name="Adams M.D."/>
            <person name="Hunkapiller M.W."/>
            <person name="Myers E.W."/>
            <person name="Venter J.C."/>
        </authorList>
    </citation>
    <scope>NUCLEOTIDE SEQUENCE [LARGE SCALE GENOMIC DNA]</scope>
</reference>
<reference key="5">
    <citation type="journal article" date="2004" name="Genome Res.">
        <title>The status, quality, and expansion of the NIH full-length cDNA project: the Mammalian Gene Collection (MGC).</title>
        <authorList>
            <consortium name="The MGC Project Team"/>
        </authorList>
    </citation>
    <scope>NUCLEOTIDE SEQUENCE [LARGE SCALE MRNA]</scope>
    <scope>VARIANT GLY-46</scope>
    <source>
        <tissue>Brain</tissue>
    </source>
</reference>
<reference key="6">
    <citation type="journal article" date="2013" name="Science">
        <title>EMRE is an essential component of the mitochondrial calcium uniporter complex.</title>
        <authorList>
            <person name="Sancak Y."/>
            <person name="Markhard A.L."/>
            <person name="Kitami T."/>
            <person name="Kovacs-Bogdan E."/>
            <person name="Kamer K.J."/>
            <person name="Udeshi N.D."/>
            <person name="Carr S.A."/>
            <person name="Chaudhuri D."/>
            <person name="Clapham D.E."/>
            <person name="Li A.A."/>
            <person name="Calvo S.E."/>
            <person name="Goldberger O."/>
            <person name="Mootha V.K."/>
        </authorList>
    </citation>
    <scope>FUNCTION</scope>
    <scope>SUBCELLULAR LOCATION</scope>
    <scope>IDENTIFICATION IN THE UNIPLEX COMPLEX</scope>
</reference>
<reference key="7">
    <citation type="journal article" date="2015" name="Proteomics">
        <title>N-terminome analysis of the human mitochondrial proteome.</title>
        <authorList>
            <person name="Vaca Jacome A.S."/>
            <person name="Rabilloud T."/>
            <person name="Schaeffer-Reiss C."/>
            <person name="Rompais M."/>
            <person name="Ayoub D."/>
            <person name="Lane L."/>
            <person name="Bairoch A."/>
            <person name="Van Dorsselaer A."/>
            <person name="Carapito C."/>
        </authorList>
    </citation>
    <scope>IDENTIFICATION BY MASS SPECTROMETRY [LARGE SCALE ANALYSIS]</scope>
</reference>
<reference key="8">
    <citation type="journal article" date="2016" name="Cell Rep.">
        <title>EMRE is a matrix Ca(2+) sensor that governs gatekeeping of the mitochondrial Ca(2+) uniporter.</title>
        <authorList>
            <person name="Vais H."/>
            <person name="Mallilankaraman K."/>
            <person name="Mak D.O."/>
            <person name="Hoff H."/>
            <person name="Payne R."/>
            <person name="Tanis J.E."/>
            <person name="Foskett J.K."/>
        </authorList>
    </citation>
    <scope>FUNCTION</scope>
    <scope>SUBCELLULAR LOCATION</scope>
    <scope>MUTAGENESIS OF 101-GLU--ASP-107</scope>
</reference>
<reference key="9">
    <citation type="journal article" date="2016" name="Cell Rep.">
        <title>MCUR1 is a scaffold factor for the MCU complex function and promotes mitochondrial bioenergetics.</title>
        <authorList>
            <person name="Tomar D."/>
            <person name="Dong Z."/>
            <person name="Shanmughapriya S."/>
            <person name="Koch D.A."/>
            <person name="Thomas T."/>
            <person name="Hoffman N.E."/>
            <person name="Timbalia S.A."/>
            <person name="Goldman S.J."/>
            <person name="Breves S.L."/>
            <person name="Corbally D.P."/>
            <person name="Nemani N."/>
            <person name="Fairweather J.P."/>
            <person name="Cutri A.R."/>
            <person name="Zhang X."/>
            <person name="Song J."/>
            <person name="Jana F."/>
            <person name="Huang J."/>
            <person name="Barrero C."/>
            <person name="Rabinowitz J.E."/>
            <person name="Luongo T.S."/>
            <person name="Schumacher S.M."/>
            <person name="Rockman M.E."/>
            <person name="Dietrich A."/>
            <person name="Merali S."/>
            <person name="Caplan J."/>
            <person name="Stathopulos P."/>
            <person name="Ahima R.S."/>
            <person name="Cheung J.Y."/>
            <person name="Houser S.R."/>
            <person name="Koch W.J."/>
            <person name="Patel V."/>
            <person name="Gohil V.M."/>
            <person name="Elrod J.W."/>
            <person name="Rajan S."/>
            <person name="Madesh M."/>
        </authorList>
    </citation>
    <scope>INTERACTION WITH MCUR1</scope>
</reference>
<reference key="10">
    <citation type="journal article" date="2016" name="Elife">
        <title>Dual functions of a small regulatory subunit in the mitochondrial calcium uniporter complex.</title>
        <authorList>
            <person name="Tsai M.F."/>
            <person name="Phillips C.B."/>
            <person name="Ranaghan M."/>
            <person name="Tsai C.W."/>
            <person name="Wu Y."/>
            <person name="Willliams C."/>
            <person name="Miller C."/>
        </authorList>
    </citation>
    <scope>FUNCTION</scope>
    <scope>SUBCELLULAR LOCATION</scope>
    <scope>TOPOLOGY</scope>
    <scope>DOMAIN</scope>
    <scope>INTERACTION WITH MCU AND MICU1</scope>
    <scope>MUTAGENESIS OF GLY-81 AND SER-85</scope>
</reference>
<reference key="11">
    <citation type="journal article" date="2016" name="Mol. Cell">
        <title>The m-AAA protease associated with neurodegeneration limits MCU activity in mitochondria.</title>
        <authorList>
            <person name="Koenig T."/>
            <person name="Troeder S.E."/>
            <person name="Bakka K."/>
            <person name="Korwitz A."/>
            <person name="Richter-Dennerlein R."/>
            <person name="Lampe P.A."/>
            <person name="Patron M."/>
            <person name="Muehlmeister M."/>
            <person name="Guerrero-Castillo S."/>
            <person name="Brandt U."/>
            <person name="Decker T."/>
            <person name="Lauria I."/>
            <person name="Paggio A."/>
            <person name="Rizzuto R."/>
            <person name="Rugarli E.I."/>
            <person name="De Stefani D."/>
            <person name="Langer T."/>
        </authorList>
    </citation>
    <scope>SUBCELLULAR LOCATION</scope>
    <scope>TOPOLOGY</scope>
    <scope>PROTEOLYTIC PROCESSING</scope>
    <scope>INTERACTION WITH MAIP1</scope>
</reference>
<reference key="12">
    <citation type="journal article" date="2017" name="Proc. Natl. Acad. Sci. U.S.A.">
        <title>Proteolytic control of the mitochondrial calcium uniporter complex.</title>
        <authorList>
            <person name="Tsai C.W."/>
            <person name="Wu Y."/>
            <person name="Pao P.C."/>
            <person name="Phillips C.B."/>
            <person name="Williams C."/>
            <person name="Miller C."/>
            <person name="Ranaghan M."/>
            <person name="Tsai M.F."/>
        </authorList>
    </citation>
    <scope>PROTEOLYTIC PROCESSING</scope>
    <scope>MUTAGENESIS OF LEU-83 AND SER-85</scope>
</reference>
<reference key="13">
    <citation type="journal article" date="2018" name="Mol. Cell">
        <title>MICU1 Interacts with the D-Ring of the MCU Pore to Control Its Ca2+ Flux and Sensitivity to Ru360.</title>
        <authorList>
            <person name="Paillard M."/>
            <person name="Csordas G."/>
            <person name="Huang K.T."/>
            <person name="Varnai P."/>
            <person name="Joseph S.K."/>
            <person name="Hajnoczky G."/>
        </authorList>
    </citation>
    <scope>FUNCTION</scope>
</reference>
<reference key="14">
    <citation type="journal article" date="2019" name="J. Biol. Chem.">
        <title>SPG7 targets the m-AAA protease complex to process MCU for uniporter assembly, Ca2+ influx, and regulation of mitochondrial permeability transition pore opening.</title>
        <authorList>
            <person name="Hurst S."/>
            <person name="Baggett A."/>
            <person name="Csordas G."/>
            <person name="Sheu S.S."/>
        </authorList>
    </citation>
    <scope>PROTEOLYTIC PROCESSING</scope>
</reference>
<reference key="15">
    <citation type="journal article" date="2020" name="Cell Rep.">
        <title>Mechanisms of EMRE-dependent MCU opening in the mitochondrial calcium uniporter complex.</title>
        <authorList>
            <person name="Van Keuren A.M."/>
            <person name="Tsai C.W."/>
            <person name="Balderas E."/>
            <person name="Rodriguez M.X."/>
            <person name="Chaudhuri D."/>
            <person name="Tsai M.F."/>
        </authorList>
    </citation>
    <scope>FUNCTION</scope>
    <scope>IDENTIFICATION IN THE UNIPLEX COMPLEX</scope>
    <scope>MUTAGENESIS OF PRO-58; LYS-59; PRO-60; 67-LEU--VAL-70; GLY-81 AND SER-85</scope>
</reference>
<reference key="16">
    <citation type="journal article" date="2020" name="EMBO J.">
        <title>The structure of the MICU1-MICU2 complex unveils the regulation of the mitochondrial calcium uniporter.</title>
        <authorList>
            <person name="Wu W."/>
            <person name="Shen Q."/>
            <person name="Zhang R."/>
            <person name="Qiu Z."/>
            <person name="Wang Y."/>
            <person name="Zheng J."/>
            <person name="Jia Z."/>
        </authorList>
    </citation>
    <scope>FUNCTION</scope>
</reference>
<reference key="17">
    <citation type="journal article" date="2020" name="IScience">
        <title>Variable assembly of EMRE and MCU creates functional channels with distinct gatekeeping profiles.</title>
        <authorList>
            <person name="Payne R."/>
            <person name="Li C."/>
            <person name="Foskett J.K."/>
        </authorList>
    </citation>
    <scope>IDENTIFICATION IN THE UNIPLEX COMPLEX</scope>
</reference>
<reference evidence="26 27" key="18">
    <citation type="journal article" date="2019" name="Cell">
        <title>Structural mechanism of EMRE-dependent gating of the human mitochondrial calcium uniporter.</title>
        <authorList>
            <person name="Wang Y."/>
            <person name="Nguyen N.X."/>
            <person name="She J."/>
            <person name="Zeng W."/>
            <person name="Yang Y."/>
            <person name="Bai X.C."/>
            <person name="Jiang Y."/>
        </authorList>
    </citation>
    <scope>STRUCTURE BY ELECTRON MICROSCOPY (3.60 ANGSTROMS) IN COMPLEX WITH MCU</scope>
    <scope>FUNCTION</scope>
    <scope>IDENTIFICATION IN THE UNIPLEX COMPLEX</scope>
</reference>
<reference evidence="30 31" key="19">
    <citation type="journal article" date="2020" name="Elife">
        <title>Structural insights into the Ca2+-dependent gating of the human mitochondrial calcium uniporter.</title>
        <authorList>
            <person name="Wang Y."/>
            <person name="Han Y."/>
            <person name="She J."/>
            <person name="Nguyen N.X."/>
            <person name="Mootha V.K."/>
            <person name="Bai X.C."/>
            <person name="Jiang Y."/>
        </authorList>
    </citation>
    <scope>STRUCTURE BY ELECTRON MICROSCOPY (4.17 ANGSTROMS) OF THE UNIPLEX COMPLEX</scope>
    <scope>FUNCTION</scope>
    <scope>IDENTIFICATION IN THE UNIPLEX COMPLEX</scope>
</reference>
<reference evidence="28 29" key="20">
    <citation type="journal article" date="2020" name="Nature">
        <title>Structure and mechanism of the mitochondrial Ca2+ uniporter holocomplex.</title>
        <authorList>
            <person name="Fan M."/>
            <person name="Zhang J."/>
            <person name="Tsai C.W."/>
            <person name="Orlando B.J."/>
            <person name="Rodriguez M."/>
            <person name="Xu Y."/>
            <person name="Liao M."/>
            <person name="Tsai M.F."/>
            <person name="Feng L."/>
        </authorList>
    </citation>
    <scope>STRUCTURE BY ELECTRON MICROSCOPY (3.20 ANGSTROMS) OF 48-100 OF THE UNIPLEX COMPLEX</scope>
    <scope>FUNCTION</scope>
    <scope>IDENTIFICATION IN THE UNIPLEX COMPLEX</scope>
</reference>
<reference evidence="24 25" key="21">
    <citation type="journal article" date="2021" name="Protein Cell">
        <title>Structure of intact human MCU supercomplex with the auxiliary MICU subunits.</title>
        <authorList>
            <person name="Zhuo W."/>
            <person name="Zhou H."/>
            <person name="Guo R."/>
            <person name="Yi J."/>
            <person name="Zhang L."/>
            <person name="Yu L."/>
            <person name="Sui Y."/>
            <person name="Zeng W."/>
            <person name="Wang P."/>
            <person name="Yang M."/>
        </authorList>
    </citation>
    <scope>STRUCTURE BY ELECTRON MICROSCOPY (3.27 ANGSTROMS) OF 48-101 OF THE UNIPLEX COMPLEX</scope>
    <scope>IDENTIFICATION IN THE UNIPLEX COMPLEX</scope>
</reference>
<organism>
    <name type="scientific">Homo sapiens</name>
    <name type="common">Human</name>
    <dbReference type="NCBI Taxonomy" id="9606"/>
    <lineage>
        <taxon>Eukaryota</taxon>
        <taxon>Metazoa</taxon>
        <taxon>Chordata</taxon>
        <taxon>Craniata</taxon>
        <taxon>Vertebrata</taxon>
        <taxon>Euteleostomi</taxon>
        <taxon>Mammalia</taxon>
        <taxon>Eutheria</taxon>
        <taxon>Euarchontoglires</taxon>
        <taxon>Primates</taxon>
        <taxon>Haplorrhini</taxon>
        <taxon>Catarrhini</taxon>
        <taxon>Hominidae</taxon>
        <taxon>Homo</taxon>
    </lineage>
</organism>
<accession>Q9H4I9</accession>
<accession>B2R5D1</accession>
<accession>Q8TAB9</accession>
<protein>
    <recommendedName>
        <fullName evidence="17">Essential MCU regulator, mitochondrial</fullName>
    </recommendedName>
    <alternativeName>
        <fullName evidence="23">Single-pass membrane protein with aspartate-rich tail 1, mitochondrial</fullName>
    </alternativeName>
</protein>
<feature type="transit peptide" description="Mitochondrion" evidence="20">
    <location>
        <begin position="1"/>
        <end position="52"/>
    </location>
</feature>
<feature type="chain" id="PRO_0000296320" description="Essential MCU regulator, mitochondrial">
    <location>
        <begin position="53"/>
        <end position="107"/>
    </location>
</feature>
<feature type="topological domain" description="Mitochondrial matrix" evidence="19 20 21 22">
    <location>
        <begin position="54"/>
        <end position="65"/>
    </location>
</feature>
<feature type="transmembrane region" description="Helical" evidence="9 12 13 15 24 25 26 27 28 29 30 31">
    <location>
        <begin position="66"/>
        <end position="85"/>
    </location>
</feature>
<feature type="topological domain" description="Mitochondrial intermembrane" evidence="19 20 21 22">
    <location>
        <begin position="86"/>
        <end position="107"/>
    </location>
</feature>
<feature type="region of interest" description="Interaction with MAIP1" evidence="6">
    <location>
        <begin position="1"/>
        <end position="52"/>
    </location>
</feature>
<feature type="short sequence motif" description="GXXXX[G/A/S]" evidence="19">
    <location>
        <begin position="81"/>
        <end position="85"/>
    </location>
</feature>
<feature type="sequence variant" id="VAR_034628" description="In dbSNP:rs17852210." evidence="1">
    <original>R</original>
    <variation>G</variation>
    <location>
        <position position="46"/>
    </location>
</feature>
<feature type="mutagenesis site" description="Abolished interaction with MCU." evidence="16">
    <original>P</original>
    <variation>W</variation>
    <location>
        <position position="58"/>
    </location>
</feature>
<feature type="mutagenesis site" description="Abolished interaction with MCU." evidence="16">
    <original>K</original>
    <variation>W</variation>
    <location>
        <position position="59"/>
    </location>
</feature>
<feature type="mutagenesis site" description="Abolished interaction with MCU." evidence="16">
    <original>P</original>
    <variation>A</variation>
    <variation>W</variation>
    <location>
        <position position="60"/>
    </location>
</feature>
<feature type="mutagenesis site" description="Does not affect interaction with MCU." evidence="16">
    <original>LLRV</original>
    <variation>QLRT</variation>
    <location>
        <begin position="67"/>
        <end position="70"/>
    </location>
</feature>
<feature type="mutagenesis site" description="Abolishes calcium uptake into mitochondria." evidence="4 16">
    <original>G</original>
    <variation>W</variation>
    <location>
        <position position="81"/>
    </location>
</feature>
<feature type="mutagenesis site" description="Promotes association with MCU, protecting SMDT1/EMRE from degradation by AFG3L2 and SP7." evidence="7">
    <original>L</original>
    <variation>W</variation>
    <location>
        <position position="83"/>
    </location>
</feature>
<feature type="mutagenesis site" description="Abolishes calcium uptake into mitochondria. Promotes association with MCU, protecting SMDT1/EMRE from degradation by AFG3L2 and SP7." evidence="4 7 16">
    <original>S</original>
    <variation>W</variation>
    <location>
        <position position="85"/>
    </location>
</feature>
<feature type="mutagenesis site" description="Abolishes regulation of calcium uptake into mitochondria." evidence="3">
    <original>EDDDDDD</original>
    <variation>QNNNNNN</variation>
    <location>
        <begin position="101"/>
        <end position="107"/>
    </location>
</feature>
<feature type="strand" evidence="32">
    <location>
        <begin position="52"/>
        <end position="54"/>
    </location>
</feature>
<feature type="helix" evidence="33">
    <location>
        <begin position="66"/>
        <end position="69"/>
    </location>
</feature>
<feature type="helix" evidence="33">
    <location>
        <begin position="71"/>
        <end position="89"/>
    </location>
</feature>
<feature type="helix" evidence="33">
    <location>
        <begin position="90"/>
        <end position="92"/>
    </location>
</feature>
<feature type="turn" evidence="33">
    <location>
        <begin position="93"/>
        <end position="95"/>
    </location>
</feature>
<proteinExistence type="evidence at protein level"/>
<comment type="function">
    <text evidence="2 3 4 8 9 11 12 13 14 16">Essential regulatory subunit of the mitochondrial calcium uniporter complex (uniplex), a complex that mediates calcium uptake into mitochondria (PubMed:24231807, PubMed:26774479, PubMed:27099988, PubMed:30454562, PubMed:31080062, PubMed:32315830, PubMed:32494073, PubMed:32762847, PubMed:32790952, PubMed:33296646). Required to bridge the calcium-sensing proteins MICU1 with the calcium-conducting subunit MCU (PubMed:24231807, PubMed:30454562, PubMed:32494073, PubMed:32762847, PubMed:32790952). Acts by mediating activation of MCU and retention of MICU1 to the MCU pore, in order to ensure tight regulation of the uniplex complex and appropriate responses to intracellular calcium signaling (PubMed:27099988, PubMed:31080062, PubMed:32315830, PubMed:33296646).</text>
</comment>
<comment type="subunit">
    <text evidence="2 4 5 6 9 11 12 13 15 16">Component of the uniplex complex, composed of MCU, EMRE/SMDT1, MICU1 and MICU2 (or MICU3) in a 4:4:1:1 stoichiometry (PubMed:24231807, PubMed:27099988, PubMed:31080062, PubMed:32315830, PubMed:32494073, PubMed:32762847, PubMed:32862359, PubMed:33296646). The number of EMRE/SMDT1 molecules is hovewer variable, ranging from 1 to 4 copies per uniplex complex, leading to uniplex complexes with distinct gatekeeping profiles (PubMed:32315830). Interacts (via its C-terminal poly-Asp tail) with MCUR1; the interaction is direct (PubMed:27184846). Unprocessed form interacts (via transit peptide) with MAIP1 (PubMed:27642048).</text>
</comment>
<comment type="interaction">
    <interactant intactId="EBI-11908005">
        <id>Q9H4I9</id>
    </interactant>
    <interactant intactId="EBI-6552124">
        <id>Q8NE86</id>
        <label>MCU</label>
    </interactant>
    <organismsDiffer>false</organismsDiffer>
    <experiments>8</experiments>
</comment>
<comment type="interaction">
    <interactant intactId="EBI-11908005">
        <id>Q9H4I9</id>
    </interactant>
    <interactant intactId="EBI-356910">
        <id>Q9H1R3</id>
        <label>MYLK2</label>
    </interactant>
    <organismsDiffer>false</organismsDiffer>
    <experiments>2</experiments>
</comment>
<comment type="subcellular location">
    <subcellularLocation>
        <location evidence="2 3 4 6 9">Mitochondrion inner membrane</location>
        <topology evidence="2 4 9">Single-pass membrane protein</topology>
    </subcellularLocation>
    <text evidence="6">MAIP1 is required to assist sorting of EMRE/SMDT1 into mitochondrion by protecting EMRE/SMDT1 against protein degradation by YME1L1, thereby ensuring SMDT1/EMRE maturation by the mitochondrial processing peptidase (PMPCA and PMPCB) (PubMed:27642048).</text>
</comment>
<comment type="domain">
    <text evidence="4">The GXXXX[G/A/S] motif at the C-terminal part of the transmembrane region mediates interaction with MCU and is required to activate the calcium-conducting pore in the uniporter complex.</text>
</comment>
<comment type="domain">
    <text evidence="4">The poly-Asp region at the C-terminus mediates interaction with the polybasic region of MICU1.</text>
</comment>
<comment type="PTM">
    <text evidence="6 7 10">Undergoes proteolytic degradation in neurons: degraded by AFG3L2 and SPG7 before SMDT1/EMRE assembly with the uniporter complex, limiting the availability of SMDT1/EMRE for MCU assembly and promoting efficient assembly of gatekeeper subunits with MCU (PubMed:27642048, PubMed:28396416, PubMed:31097542).</text>
</comment>
<comment type="similarity">
    <text evidence="18">Belongs to the SMDT1/EMRE family.</text>
</comment>
<comment type="caution">
    <text evidence="3 4 6">A publication reports an opposite topology (PubMed:26774479). However, 3 different articles, 2 in human and one in mouse, confirm the topology shown in this entry (PubMed:27099988, PubMed:27642048).</text>
</comment>
<sequence>MASGAARWLVLAPVRSGALRSGPSLRKDGDVSAAWSGSGRSLVPSRSVIVTRSGAILPKPVKMSFGLLRVFSIVIPFLYVGTLISKNFAALLEEHDIFVPEDDDDDD</sequence>
<keyword id="KW-0002">3D-structure</keyword>
<keyword id="KW-0106">Calcium</keyword>
<keyword id="KW-0109">Calcium transport</keyword>
<keyword id="KW-0406">Ion transport</keyword>
<keyword id="KW-0472">Membrane</keyword>
<keyword id="KW-0496">Mitochondrion</keyword>
<keyword id="KW-0999">Mitochondrion inner membrane</keyword>
<keyword id="KW-1267">Proteomics identification</keyword>
<keyword id="KW-1185">Reference proteome</keyword>
<keyword id="KW-0809">Transit peptide</keyword>
<keyword id="KW-0812">Transmembrane</keyword>
<keyword id="KW-1133">Transmembrane helix</keyword>
<keyword id="KW-0813">Transport</keyword>
<name>EMRE_HUMAN</name>
<dbReference type="EMBL" id="AL449243">
    <property type="protein sequence ID" value="CAC15000.1"/>
    <property type="molecule type" value="mRNA"/>
</dbReference>
<dbReference type="EMBL" id="CR456453">
    <property type="protein sequence ID" value="CAG30339.1"/>
    <property type="molecule type" value="mRNA"/>
</dbReference>
<dbReference type="EMBL" id="AK312142">
    <property type="protein sequence ID" value="BAG35078.1"/>
    <property type="molecule type" value="mRNA"/>
</dbReference>
<dbReference type="EMBL" id="AL021878">
    <property type="status" value="NOT_ANNOTATED_CDS"/>
    <property type="molecule type" value="Genomic_DNA"/>
</dbReference>
<dbReference type="EMBL" id="Z82192">
    <property type="status" value="NOT_ANNOTATED_CDS"/>
    <property type="molecule type" value="Genomic_DNA"/>
</dbReference>
<dbReference type="EMBL" id="CH471095">
    <property type="protein sequence ID" value="EAW60488.1"/>
    <property type="molecule type" value="Genomic_DNA"/>
</dbReference>
<dbReference type="EMBL" id="BC024237">
    <property type="protein sequence ID" value="AAH24237.1"/>
    <property type="molecule type" value="mRNA"/>
</dbReference>
<dbReference type="CCDS" id="CCDS14031.1"/>
<dbReference type="RefSeq" id="NP_201575.3">
    <property type="nucleotide sequence ID" value="NM_033318.4"/>
</dbReference>
<dbReference type="RefSeq" id="XP_011528811.1">
    <property type="nucleotide sequence ID" value="XM_011530509.3"/>
</dbReference>
<dbReference type="RefSeq" id="XP_054182107.1">
    <property type="nucleotide sequence ID" value="XM_054326132.1"/>
</dbReference>
<dbReference type="RefSeq" id="XP_054185587.1">
    <property type="nucleotide sequence ID" value="XM_054329612.1"/>
</dbReference>
<dbReference type="RefSeq" id="XP_054186183.1">
    <property type="nucleotide sequence ID" value="XM_054330208.1"/>
</dbReference>
<dbReference type="RefSeq" id="XP_054186425.1">
    <property type="nucleotide sequence ID" value="XM_054330450.1"/>
</dbReference>
<dbReference type="PDB" id="6K7X">
    <property type="method" value="EM"/>
    <property type="resolution" value="3.27 A"/>
    <property type="chains" value="E/F/G/H/O/P/Q/R=48-101"/>
</dbReference>
<dbReference type="PDB" id="6K7Y">
    <property type="method" value="EM"/>
    <property type="resolution" value="3.60 A"/>
    <property type="chains" value="E/F/G/H/R/S/T/U=48-101"/>
</dbReference>
<dbReference type="PDB" id="6O58">
    <property type="method" value="EM"/>
    <property type="resolution" value="3.80 A"/>
    <property type="chains" value="B/D/F/H/J/L/N/P=1-107"/>
</dbReference>
<dbReference type="PDB" id="6O5B">
    <property type="method" value="EM"/>
    <property type="resolution" value="3.60 A"/>
    <property type="chains" value="B/D/F/H=1-107"/>
</dbReference>
<dbReference type="PDB" id="6WDN">
    <property type="method" value="EM"/>
    <property type="resolution" value="3.20 A"/>
    <property type="chains" value="D/F/H/J=48-98"/>
</dbReference>
<dbReference type="PDB" id="6WDO">
    <property type="method" value="EM"/>
    <property type="resolution" value="3.60 A"/>
    <property type="chains" value="B/D/F/H/J/L/N/P=48-100"/>
</dbReference>
<dbReference type="PDB" id="6XJV">
    <property type="method" value="EM"/>
    <property type="resolution" value="4.17 A"/>
    <property type="chains" value="B/D/F/H/J/L/N/P=1-107"/>
</dbReference>
<dbReference type="PDB" id="6XJX">
    <property type="method" value="EM"/>
    <property type="resolution" value="4.60 A"/>
    <property type="chains" value="B/D/F/H=1-107"/>
</dbReference>
<dbReference type="PDBsum" id="6K7X"/>
<dbReference type="PDBsum" id="6K7Y"/>
<dbReference type="PDBsum" id="6O58"/>
<dbReference type="PDBsum" id="6O5B"/>
<dbReference type="PDBsum" id="6WDN"/>
<dbReference type="PDBsum" id="6WDO"/>
<dbReference type="PDBsum" id="6XJV"/>
<dbReference type="PDBsum" id="6XJX"/>
<dbReference type="EMDB" id="EMD-0625"/>
<dbReference type="EMDB" id="EMD-0626"/>
<dbReference type="EMDB" id="EMD-21642"/>
<dbReference type="EMDB" id="EMD-21643"/>
<dbReference type="EMDB" id="EMD-22215"/>
<dbReference type="EMDB" id="EMD-22216"/>
<dbReference type="EMDB" id="EMD-9944"/>
<dbReference type="EMDB" id="EMD-9945"/>
<dbReference type="SMR" id="Q9H4I9"/>
<dbReference type="BioGRID" id="124866">
    <property type="interactions" value="28"/>
</dbReference>
<dbReference type="ComplexPortal" id="CPX-5961">
    <property type="entry name" value="Mitochondrial calcium uniporter complex, MICU1-MICU2 variant"/>
</dbReference>
<dbReference type="ComplexPortal" id="CPX-5963">
    <property type="entry name" value="Mitochondrial calcium uniporter complex, MICU1 variant"/>
</dbReference>
<dbReference type="ComplexPortal" id="CPX-5965">
    <property type="entry name" value="Mitochondrial calcium uniporter complex, MICU1-MICU3 variant"/>
</dbReference>
<dbReference type="ComplexPortal" id="CPX-5966">
    <property type="entry name" value="Mitochondrial calcium uniporter complex, MICUB variant"/>
</dbReference>
<dbReference type="CORUM" id="Q9H4I9"/>
<dbReference type="FunCoup" id="Q9H4I9">
    <property type="interactions" value="813"/>
</dbReference>
<dbReference type="IntAct" id="Q9H4I9">
    <property type="interactions" value="15"/>
</dbReference>
<dbReference type="STRING" id="9606.ENSP00000327467"/>
<dbReference type="TCDB" id="8.A.45.1.1">
    <property type="family name" value="the essential mcu regulator emre (emre) family"/>
</dbReference>
<dbReference type="GlyGen" id="Q9H4I9">
    <property type="glycosylation" value="1 site, 1 O-linked glycan (1 site)"/>
</dbReference>
<dbReference type="iPTMnet" id="Q9H4I9"/>
<dbReference type="BioMuta" id="SMDT1"/>
<dbReference type="DMDM" id="74761431"/>
<dbReference type="jPOST" id="Q9H4I9"/>
<dbReference type="MassIVE" id="Q9H4I9"/>
<dbReference type="PaxDb" id="9606-ENSP00000327467"/>
<dbReference type="PeptideAtlas" id="Q9H4I9"/>
<dbReference type="ProteomicsDB" id="80848"/>
<dbReference type="Pumba" id="Q9H4I9"/>
<dbReference type="TopDownProteomics" id="Q9H4I9"/>
<dbReference type="Antibodypedia" id="27229">
    <property type="antibodies" value="15 antibodies from 7 providers"/>
</dbReference>
<dbReference type="DNASU" id="91689"/>
<dbReference type="Ensembl" id="ENST00000331479.4">
    <property type="protein sequence ID" value="ENSP00000327467.3"/>
    <property type="gene ID" value="ENSG00000183172.9"/>
</dbReference>
<dbReference type="Ensembl" id="ENST00000571525.3">
    <property type="protein sequence ID" value="ENSP00000459368.1"/>
    <property type="gene ID" value="ENSG00000272901.5"/>
</dbReference>
<dbReference type="Ensembl" id="ENST00000607293.3">
    <property type="protein sequence ID" value="ENSP00000475471.1"/>
    <property type="gene ID" value="ENSG00000272835.3"/>
</dbReference>
<dbReference type="Ensembl" id="ENST00000615504.2">
    <property type="protein sequence ID" value="ENSP00000485029.1"/>
    <property type="gene ID" value="ENSG00000274112.2"/>
</dbReference>
<dbReference type="GeneID" id="91689"/>
<dbReference type="KEGG" id="hsa:91689"/>
<dbReference type="MANE-Select" id="ENST00000331479.4">
    <property type="protein sequence ID" value="ENSP00000327467.3"/>
    <property type="RefSeq nucleotide sequence ID" value="NM_033318.5"/>
    <property type="RefSeq protein sequence ID" value="NP_201575.3"/>
</dbReference>
<dbReference type="UCSC" id="uc003bca.4">
    <property type="organism name" value="human"/>
</dbReference>
<dbReference type="AGR" id="HGNC:25055"/>
<dbReference type="CTD" id="91689"/>
<dbReference type="DisGeNET" id="91689"/>
<dbReference type="GeneCards" id="SMDT1"/>
<dbReference type="HGNC" id="HGNC:25055">
    <property type="gene designation" value="SMDT1"/>
</dbReference>
<dbReference type="HPA" id="ENSG00000183172">
    <property type="expression patterns" value="Low tissue specificity"/>
</dbReference>
<dbReference type="MIM" id="615588">
    <property type="type" value="gene"/>
</dbReference>
<dbReference type="neXtProt" id="NX_Q9H4I9"/>
<dbReference type="OpenTargets" id="ENSG00000183172"/>
<dbReference type="PharmGKB" id="PA145149451"/>
<dbReference type="VEuPathDB" id="HostDB:ENSG00000183172"/>
<dbReference type="eggNOG" id="KOG4542">
    <property type="taxonomic scope" value="Eukaryota"/>
</dbReference>
<dbReference type="GeneTree" id="ENSGT00390000017489"/>
<dbReference type="HOGENOM" id="CLU_172921_1_0_1"/>
<dbReference type="InParanoid" id="Q9H4I9"/>
<dbReference type="OMA" id="NISKHEH"/>
<dbReference type="OrthoDB" id="10039145at2759"/>
<dbReference type="PAN-GO" id="Q9H4I9">
    <property type="GO annotations" value="4 GO annotations based on evolutionary models"/>
</dbReference>
<dbReference type="PhylomeDB" id="Q9H4I9"/>
<dbReference type="TreeFam" id="TF314649"/>
<dbReference type="PathwayCommons" id="Q9H4I9"/>
<dbReference type="Reactome" id="R-HSA-8949215">
    <property type="pathway name" value="Mitochondrial calcium ion transport"/>
</dbReference>
<dbReference type="Reactome" id="R-HSA-8949664">
    <property type="pathway name" value="Processing of SMDT1"/>
</dbReference>
<dbReference type="Reactome" id="R-HSA-9837999">
    <property type="pathway name" value="Mitochondrial protein degradation"/>
</dbReference>
<dbReference type="SignaLink" id="Q9H4I9"/>
<dbReference type="SIGNOR" id="Q9H4I9"/>
<dbReference type="BioGRID-ORCS" id="91689">
    <property type="hits" value="14 hits in 1155 CRISPR screens"/>
</dbReference>
<dbReference type="ChiTaRS" id="SMDT1">
    <property type="organism name" value="human"/>
</dbReference>
<dbReference type="GenomeRNAi" id="91689"/>
<dbReference type="Pharos" id="Q9H4I9">
    <property type="development level" value="Tbio"/>
</dbReference>
<dbReference type="PRO" id="PR:Q9H4I9"/>
<dbReference type="Proteomes" id="UP000005640">
    <property type="component" value="Chromosome 22"/>
</dbReference>
<dbReference type="RNAct" id="Q9H4I9">
    <property type="molecule type" value="protein"/>
</dbReference>
<dbReference type="Bgee" id="ENSG00000183172">
    <property type="expression patterns" value="Expressed in hindlimb stylopod muscle and 105 other cell types or tissues"/>
</dbReference>
<dbReference type="ExpressionAtlas" id="Q9H4I9">
    <property type="expression patterns" value="baseline and differential"/>
</dbReference>
<dbReference type="GO" id="GO:0005743">
    <property type="term" value="C:mitochondrial inner membrane"/>
    <property type="evidence" value="ECO:0000314"/>
    <property type="project" value="UniProtKB"/>
</dbReference>
<dbReference type="GO" id="GO:0005759">
    <property type="term" value="C:mitochondrial matrix"/>
    <property type="evidence" value="ECO:0000304"/>
    <property type="project" value="Reactome"/>
</dbReference>
<dbReference type="GO" id="GO:0005739">
    <property type="term" value="C:mitochondrion"/>
    <property type="evidence" value="ECO:0000314"/>
    <property type="project" value="HPA"/>
</dbReference>
<dbReference type="GO" id="GO:0005654">
    <property type="term" value="C:nucleoplasm"/>
    <property type="evidence" value="ECO:0000314"/>
    <property type="project" value="HPA"/>
</dbReference>
<dbReference type="GO" id="GO:1990246">
    <property type="term" value="C:uniplex complex"/>
    <property type="evidence" value="ECO:0000314"/>
    <property type="project" value="UniProtKB"/>
</dbReference>
<dbReference type="GO" id="GO:0099103">
    <property type="term" value="F:channel activator activity"/>
    <property type="evidence" value="ECO:0000314"/>
    <property type="project" value="UniProtKB"/>
</dbReference>
<dbReference type="GO" id="GO:0030674">
    <property type="term" value="F:protein-macromolecule adaptor activity"/>
    <property type="evidence" value="ECO:0000314"/>
    <property type="project" value="UniProtKB"/>
</dbReference>
<dbReference type="GO" id="GO:0036444">
    <property type="term" value="P:calcium import into the mitochondrion"/>
    <property type="evidence" value="ECO:0000314"/>
    <property type="project" value="UniProtKB"/>
</dbReference>
<dbReference type="GO" id="GO:0072732">
    <property type="term" value="P:cellular response to calcium ion starvation"/>
    <property type="evidence" value="ECO:0000314"/>
    <property type="project" value="UniProt"/>
</dbReference>
<dbReference type="GO" id="GO:0051560">
    <property type="term" value="P:mitochondrial calcium ion homeostasis"/>
    <property type="evidence" value="ECO:0000314"/>
    <property type="project" value="ComplexPortal"/>
</dbReference>
<dbReference type="GO" id="GO:0006851">
    <property type="term" value="P:mitochondrial calcium ion transmembrane transport"/>
    <property type="evidence" value="ECO:0000315"/>
    <property type="project" value="UniProtKB"/>
</dbReference>
<dbReference type="InterPro" id="IPR018782">
    <property type="entry name" value="MCU_reg"/>
</dbReference>
<dbReference type="PANTHER" id="PTHR33904">
    <property type="entry name" value="ESSENTIAL MCU REGULATOR, MITOCHONDRIAL"/>
    <property type="match status" value="1"/>
</dbReference>
<dbReference type="PANTHER" id="PTHR33904:SF1">
    <property type="entry name" value="ESSENTIAL MCU REGULATOR, MITOCHONDRIAL"/>
    <property type="match status" value="1"/>
</dbReference>
<dbReference type="Pfam" id="PF10161">
    <property type="entry name" value="DDDD"/>
    <property type="match status" value="1"/>
</dbReference>
<evidence type="ECO:0000269" key="1">
    <source>
    </source>
</evidence>
<evidence type="ECO:0000269" key="2">
    <source>
    </source>
</evidence>
<evidence type="ECO:0000269" key="3">
    <source>
    </source>
</evidence>
<evidence type="ECO:0000269" key="4">
    <source>
    </source>
</evidence>
<evidence type="ECO:0000269" key="5">
    <source>
    </source>
</evidence>
<evidence type="ECO:0000269" key="6">
    <source>
    </source>
</evidence>
<evidence type="ECO:0000269" key="7">
    <source>
    </source>
</evidence>
<evidence type="ECO:0000269" key="8">
    <source>
    </source>
</evidence>
<evidence type="ECO:0000269" key="9">
    <source>
    </source>
</evidence>
<evidence type="ECO:0000269" key="10">
    <source>
    </source>
</evidence>
<evidence type="ECO:0000269" key="11">
    <source>
    </source>
</evidence>
<evidence type="ECO:0000269" key="12">
    <source>
    </source>
</evidence>
<evidence type="ECO:0000269" key="13">
    <source>
    </source>
</evidence>
<evidence type="ECO:0000269" key="14">
    <source>
    </source>
</evidence>
<evidence type="ECO:0000269" key="15">
    <source>
    </source>
</evidence>
<evidence type="ECO:0000269" key="16">
    <source>
    </source>
</evidence>
<evidence type="ECO:0000303" key="17">
    <source>
    </source>
</evidence>
<evidence type="ECO:0000305" key="18"/>
<evidence type="ECO:0000305" key="19">
    <source>
    </source>
</evidence>
<evidence type="ECO:0000305" key="20">
    <source>
    </source>
</evidence>
<evidence type="ECO:0000305" key="21">
    <source>
    </source>
</evidence>
<evidence type="ECO:0000305" key="22">
    <source>
    </source>
</evidence>
<evidence type="ECO:0000312" key="23">
    <source>
        <dbReference type="HGNC" id="HGNC:25055"/>
    </source>
</evidence>
<evidence type="ECO:0007744" key="24">
    <source>
        <dbReference type="PDB" id="6K7X"/>
    </source>
</evidence>
<evidence type="ECO:0007744" key="25">
    <source>
        <dbReference type="PDB" id="6K7Y"/>
    </source>
</evidence>
<evidence type="ECO:0007744" key="26">
    <source>
        <dbReference type="PDB" id="6O58"/>
    </source>
</evidence>
<evidence type="ECO:0007744" key="27">
    <source>
        <dbReference type="PDB" id="6O5B"/>
    </source>
</evidence>
<evidence type="ECO:0007744" key="28">
    <source>
        <dbReference type="PDB" id="6WDN"/>
    </source>
</evidence>
<evidence type="ECO:0007744" key="29">
    <source>
        <dbReference type="PDB" id="6WDO"/>
    </source>
</evidence>
<evidence type="ECO:0007744" key="30">
    <source>
        <dbReference type="PDB" id="6XJV"/>
    </source>
</evidence>
<evidence type="ECO:0007744" key="31">
    <source>
        <dbReference type="PDB" id="6XJX"/>
    </source>
</evidence>
<evidence type="ECO:0007829" key="32">
    <source>
        <dbReference type="PDB" id="6K7X"/>
    </source>
</evidence>
<evidence type="ECO:0007829" key="33">
    <source>
        <dbReference type="PDB" id="6WDN"/>
    </source>
</evidence>
<gene>
    <name evidence="23" type="primary">SMDT1</name>
    <name evidence="23" type="synonym">C22orf32</name>
    <name evidence="17" type="synonym">EMRE</name>
</gene>